<name>Y522_HAEIN</name>
<keyword id="KW-1003">Cell membrane</keyword>
<keyword id="KW-0472">Membrane</keyword>
<keyword id="KW-1185">Reference proteome</keyword>
<keyword id="KW-0812">Transmembrane</keyword>
<keyword id="KW-1133">Transmembrane helix</keyword>
<sequence length="218" mass="23520">MKKKVRVIPRTSWAATSLWTAQYKTISILLFALSILGIGDGLIVLSGLGSTPWTVLSQGIAIQTNFDIGWSSFLISCAVMLVWKPLKLRLGLGTLLNIIVIALFLGITTKILAPPTALFSRMIFCLIGILLYGFGTALYLTCHLGAGPRDGLMVGICQRFHLSINVVRSSLEISVCLLGFLLGGVVGLGTVLFATSIGSVVQFFLNIIARLPHIPYEK</sequence>
<protein>
    <recommendedName>
        <fullName>Uncharacterized protein HI_0522</fullName>
    </recommendedName>
</protein>
<reference key="1">
    <citation type="journal article" date="1995" name="Science">
        <title>Whole-genome random sequencing and assembly of Haemophilus influenzae Rd.</title>
        <authorList>
            <person name="Fleischmann R.D."/>
            <person name="Adams M.D."/>
            <person name="White O."/>
            <person name="Clayton R.A."/>
            <person name="Kirkness E.F."/>
            <person name="Kerlavage A.R."/>
            <person name="Bult C.J."/>
            <person name="Tomb J.-F."/>
            <person name="Dougherty B.A."/>
            <person name="Merrick J.M."/>
            <person name="McKenney K."/>
            <person name="Sutton G.G."/>
            <person name="FitzHugh W."/>
            <person name="Fields C.A."/>
            <person name="Gocayne J.D."/>
            <person name="Scott J.D."/>
            <person name="Shirley R."/>
            <person name="Liu L.-I."/>
            <person name="Glodek A."/>
            <person name="Kelley J.M."/>
            <person name="Weidman J.F."/>
            <person name="Phillips C.A."/>
            <person name="Spriggs T."/>
            <person name="Hedblom E."/>
            <person name="Cotton M.D."/>
            <person name="Utterback T.R."/>
            <person name="Hanna M.C."/>
            <person name="Nguyen D.T."/>
            <person name="Saudek D.M."/>
            <person name="Brandon R.C."/>
            <person name="Fine L.D."/>
            <person name="Fritchman J.L."/>
            <person name="Fuhrmann J.L."/>
            <person name="Geoghagen N.S.M."/>
            <person name="Gnehm C.L."/>
            <person name="McDonald L.A."/>
            <person name="Small K.V."/>
            <person name="Fraser C.M."/>
            <person name="Smith H.O."/>
            <person name="Venter J.C."/>
        </authorList>
    </citation>
    <scope>NUCLEOTIDE SEQUENCE [LARGE SCALE GENOMIC DNA]</scope>
    <source>
        <strain>ATCC 51907 / DSM 11121 / KW20 / Rd</strain>
    </source>
</reference>
<proteinExistence type="predicted"/>
<organism>
    <name type="scientific">Haemophilus influenzae (strain ATCC 51907 / DSM 11121 / KW20 / Rd)</name>
    <dbReference type="NCBI Taxonomy" id="71421"/>
    <lineage>
        <taxon>Bacteria</taxon>
        <taxon>Pseudomonadati</taxon>
        <taxon>Pseudomonadota</taxon>
        <taxon>Gammaproteobacteria</taxon>
        <taxon>Pasteurellales</taxon>
        <taxon>Pasteurellaceae</taxon>
        <taxon>Haemophilus</taxon>
    </lineage>
</organism>
<comment type="subcellular location">
    <subcellularLocation>
        <location evidence="2">Cell membrane</location>
        <topology evidence="2">Multi-pass membrane protein</topology>
    </subcellularLocation>
</comment>
<evidence type="ECO:0000255" key="1"/>
<evidence type="ECO:0000305" key="2"/>
<feature type="chain" id="PRO_0000077929" description="Uncharacterized protein HI_0522">
    <location>
        <begin position="1"/>
        <end position="218"/>
    </location>
</feature>
<feature type="transmembrane region" description="Helical" evidence="1">
    <location>
        <begin position="28"/>
        <end position="48"/>
    </location>
</feature>
<feature type="transmembrane region" description="Helical" evidence="1">
    <location>
        <begin position="66"/>
        <end position="86"/>
    </location>
</feature>
<feature type="transmembrane region" description="Helical" evidence="1">
    <location>
        <begin position="92"/>
        <end position="112"/>
    </location>
</feature>
<feature type="transmembrane region" description="Helical" evidence="1">
    <location>
        <begin position="122"/>
        <end position="142"/>
    </location>
</feature>
<feature type="transmembrane region" description="Helical" evidence="1">
    <location>
        <begin position="173"/>
        <end position="193"/>
    </location>
</feature>
<gene>
    <name type="ordered locus">HI_0522</name>
</gene>
<accession>Q57256</accession>
<accession>O05024</accession>
<dbReference type="EMBL" id="L42023">
    <property type="protein sequence ID" value="AAC22180.1"/>
    <property type="molecule type" value="Genomic_DNA"/>
</dbReference>
<dbReference type="PIR" id="D64154">
    <property type="entry name" value="D64154"/>
</dbReference>
<dbReference type="RefSeq" id="NP_438680.1">
    <property type="nucleotide sequence ID" value="NC_000907.1"/>
</dbReference>
<dbReference type="STRING" id="71421.HI_0522"/>
<dbReference type="EnsemblBacteria" id="AAC22180">
    <property type="protein sequence ID" value="AAC22180"/>
    <property type="gene ID" value="HI_0522"/>
</dbReference>
<dbReference type="KEGG" id="hin:HI_0522"/>
<dbReference type="PATRIC" id="fig|71421.8.peg.541"/>
<dbReference type="eggNOG" id="COG2364">
    <property type="taxonomic scope" value="Bacteria"/>
</dbReference>
<dbReference type="HOGENOM" id="CLU_083843_0_0_6"/>
<dbReference type="OrthoDB" id="154912at2"/>
<dbReference type="PhylomeDB" id="Q57256"/>
<dbReference type="BioCyc" id="HINF71421:G1GJ1-535-MONOMER"/>
<dbReference type="Proteomes" id="UP000000579">
    <property type="component" value="Chromosome"/>
</dbReference>
<dbReference type="GO" id="GO:0005886">
    <property type="term" value="C:plasma membrane"/>
    <property type="evidence" value="ECO:0007669"/>
    <property type="project" value="UniProtKB-SubCell"/>
</dbReference>
<dbReference type="InterPro" id="IPR038750">
    <property type="entry name" value="YczE/YyaS-like"/>
</dbReference>
<dbReference type="PANTHER" id="PTHR40078:SF1">
    <property type="entry name" value="INTEGRAL MEMBRANE PROTEIN"/>
    <property type="match status" value="1"/>
</dbReference>
<dbReference type="PANTHER" id="PTHR40078">
    <property type="entry name" value="INTEGRAL MEMBRANE PROTEIN-RELATED"/>
    <property type="match status" value="1"/>
</dbReference>